<proteinExistence type="evidence at protein level"/>
<comment type="function">
    <text evidence="1">Plays a role in mitotic bipolar spindle formation. Binds mRNA. May function in nucleocytoplasmic transport and in directly or indirectly attaching cytoplasmic mRNPs to the cytoskeleton.</text>
</comment>
<comment type="subunit">
    <text evidence="1 3">Interacts with NUMA1 (via N-terminal end of the coiled-coil domain); this interaction promotes spindle formation in mitosis (By similarity). Interacts with NUP98 (PubMed:10209021). Interacts with MYCBP2 (By similarity). Interacts with USP11 (By similarity).</text>
</comment>
<comment type="subcellular location">
    <subcellularLocation>
        <location evidence="1">Cytoplasm</location>
    </subcellularLocation>
    <subcellularLocation>
        <location evidence="1">Nucleus</location>
    </subcellularLocation>
    <subcellularLocation>
        <location evidence="1">Cytoplasm</location>
        <location evidence="1">Cytoskeleton</location>
        <location evidence="1">Spindle pole</location>
    </subcellularLocation>
    <text evidence="1">Recruited from interphase nuclei to spindle MTs during mitosis.</text>
</comment>
<comment type="similarity">
    <text evidence="4">Belongs to the WD repeat rae1 family.</text>
</comment>
<accession>Q8C570</accession>
<accession>Q3UKD4</accession>
<organism>
    <name type="scientific">Mus musculus</name>
    <name type="common">Mouse</name>
    <dbReference type="NCBI Taxonomy" id="10090"/>
    <lineage>
        <taxon>Eukaryota</taxon>
        <taxon>Metazoa</taxon>
        <taxon>Chordata</taxon>
        <taxon>Craniata</taxon>
        <taxon>Vertebrata</taxon>
        <taxon>Euteleostomi</taxon>
        <taxon>Mammalia</taxon>
        <taxon>Eutheria</taxon>
        <taxon>Euarchontoglires</taxon>
        <taxon>Glires</taxon>
        <taxon>Rodentia</taxon>
        <taxon>Myomorpha</taxon>
        <taxon>Muroidea</taxon>
        <taxon>Muridae</taxon>
        <taxon>Murinae</taxon>
        <taxon>Mus</taxon>
        <taxon>Mus</taxon>
    </lineage>
</organism>
<sequence length="368" mass="40965">MSLFGSTSGFGTGGTSMFGSTTTDNHNPMKDIEVTSSPDDSIGCLSFSPPTLPGNFLIAGSWANDVRCWEVQDSGQTIPKAQQMHTGPVLDVCWSDDGSKVFTASCDKTAKMWDLNSNQAIQIAQHDAPVKTIHWIKAPNYSCVMTGSWDKTLKFWDTRSSNPMMVLQLPERCYCADVIYPMAVVATAERGLIVYQLENQPSEFRRIESPLKHQHRCVAIFKDKQNKPTGFALGSIEGRVAIHYINPPNPAKDNFTFKCHRSNGTNTSAPQDIYAVNGIAFHPVHGTLATVGSDGRFSFWDKDARTKLKTSEQLDQPIAACCFNHNGNIFAYASSYDWSKGHEFYNPQKKNYIFLRNAAEELKPRNKK</sequence>
<feature type="chain" id="PRO_0000237586" description="mRNA export factor">
    <location>
        <begin position="1"/>
        <end position="368"/>
    </location>
</feature>
<feature type="repeat" description="WD 1">
    <location>
        <begin position="37"/>
        <end position="79"/>
    </location>
</feature>
<feature type="repeat" description="WD 2">
    <location>
        <begin position="84"/>
        <end position="114"/>
    </location>
</feature>
<feature type="repeat" description="WD 3">
    <location>
        <begin position="125"/>
        <end position="157"/>
    </location>
</feature>
<feature type="repeat" description="WD 4">
    <location>
        <begin position="168"/>
        <end position="206"/>
    </location>
</feature>
<feature type="repeat" description="WD 5">
    <location>
        <begin position="215"/>
        <end position="255"/>
    </location>
</feature>
<feature type="repeat" description="WD 6">
    <location>
        <begin position="271"/>
        <end position="301"/>
    </location>
</feature>
<feature type="repeat" description="WD 7">
    <location>
        <begin position="310"/>
        <end position="346"/>
    </location>
</feature>
<feature type="region of interest" description="Disordered" evidence="2">
    <location>
        <begin position="15"/>
        <end position="34"/>
    </location>
</feature>
<feature type="modified residue" description="Phosphothreonine" evidence="1">
    <location>
        <position position="229"/>
    </location>
</feature>
<feature type="sequence conflict" description="In Ref. 1; BAE26867." evidence="4" ref="1">
    <original>A</original>
    <variation>T</variation>
    <location>
        <position position="232"/>
    </location>
</feature>
<feature type="strand" evidence="5">
    <location>
        <begin position="42"/>
        <end position="47"/>
    </location>
</feature>
<feature type="strand" evidence="5">
    <location>
        <begin position="52"/>
        <end position="61"/>
    </location>
</feature>
<feature type="strand" evidence="5">
    <location>
        <begin position="64"/>
        <end position="71"/>
    </location>
</feature>
<feature type="strand" evidence="5">
    <location>
        <begin position="77"/>
        <end position="84"/>
    </location>
</feature>
<feature type="strand" evidence="5">
    <location>
        <begin position="89"/>
        <end position="94"/>
    </location>
</feature>
<feature type="strand" evidence="5">
    <location>
        <begin position="98"/>
        <end position="105"/>
    </location>
</feature>
<feature type="strand" evidence="5">
    <location>
        <begin position="108"/>
        <end position="114"/>
    </location>
</feature>
<feature type="turn" evidence="5">
    <location>
        <begin position="115"/>
        <end position="118"/>
    </location>
</feature>
<feature type="strand" evidence="5">
    <location>
        <begin position="119"/>
        <end position="125"/>
    </location>
</feature>
<feature type="strand" evidence="5">
    <location>
        <begin position="130"/>
        <end position="137"/>
    </location>
</feature>
<feature type="strand" evidence="5">
    <location>
        <begin position="142"/>
        <end position="148"/>
    </location>
</feature>
<feature type="strand" evidence="5">
    <location>
        <begin position="151"/>
        <end position="156"/>
    </location>
</feature>
<feature type="strand" evidence="5">
    <location>
        <begin position="164"/>
        <end position="168"/>
    </location>
</feature>
<feature type="strand" evidence="5">
    <location>
        <begin position="173"/>
        <end position="179"/>
    </location>
</feature>
<feature type="strand" evidence="5">
    <location>
        <begin position="182"/>
        <end position="187"/>
    </location>
</feature>
<feature type="turn" evidence="5">
    <location>
        <begin position="188"/>
        <end position="190"/>
    </location>
</feature>
<feature type="strand" evidence="5">
    <location>
        <begin position="191"/>
        <end position="196"/>
    </location>
</feature>
<feature type="strand" evidence="5">
    <location>
        <begin position="198"/>
        <end position="200"/>
    </location>
</feature>
<feature type="strand" evidence="5">
    <location>
        <begin position="202"/>
        <end position="206"/>
    </location>
</feature>
<feature type="strand" evidence="5">
    <location>
        <begin position="215"/>
        <end position="222"/>
    </location>
</feature>
<feature type="strand" evidence="5">
    <location>
        <begin position="228"/>
        <end position="235"/>
    </location>
</feature>
<feature type="strand" evidence="5">
    <location>
        <begin position="238"/>
        <end position="246"/>
    </location>
</feature>
<feature type="helix" evidence="5">
    <location>
        <begin position="250"/>
        <end position="253"/>
    </location>
</feature>
<feature type="strand" evidence="5">
    <location>
        <begin position="255"/>
        <end position="258"/>
    </location>
</feature>
<feature type="strand" evidence="5">
    <location>
        <begin position="271"/>
        <end position="273"/>
    </location>
</feature>
<feature type="strand" evidence="5">
    <location>
        <begin position="276"/>
        <end position="281"/>
    </location>
</feature>
<feature type="turn" evidence="5">
    <location>
        <begin position="283"/>
        <end position="285"/>
    </location>
</feature>
<feature type="strand" evidence="5">
    <location>
        <begin position="288"/>
        <end position="292"/>
    </location>
</feature>
<feature type="strand" evidence="5">
    <location>
        <begin position="297"/>
        <end position="301"/>
    </location>
</feature>
<feature type="turn" evidence="5">
    <location>
        <begin position="302"/>
        <end position="305"/>
    </location>
</feature>
<feature type="strand" evidence="5">
    <location>
        <begin position="306"/>
        <end position="310"/>
    </location>
</feature>
<feature type="strand" evidence="5">
    <location>
        <begin position="318"/>
        <end position="323"/>
    </location>
</feature>
<feature type="strand" evidence="5">
    <location>
        <begin position="327"/>
        <end position="334"/>
    </location>
</feature>
<feature type="helix" evidence="5">
    <location>
        <begin position="342"/>
        <end position="344"/>
    </location>
</feature>
<feature type="strand" evidence="5">
    <location>
        <begin position="352"/>
        <end position="357"/>
    </location>
</feature>
<feature type="turn" evidence="5">
    <location>
        <begin position="359"/>
        <end position="362"/>
    </location>
</feature>
<keyword id="KW-0002">3D-structure</keyword>
<keyword id="KW-0131">Cell cycle</keyword>
<keyword id="KW-0132">Cell division</keyword>
<keyword id="KW-0963">Cytoplasm</keyword>
<keyword id="KW-0206">Cytoskeleton</keyword>
<keyword id="KW-0498">Mitosis</keyword>
<keyword id="KW-0539">Nucleus</keyword>
<keyword id="KW-0597">Phosphoprotein</keyword>
<keyword id="KW-1185">Reference proteome</keyword>
<keyword id="KW-0677">Repeat</keyword>
<keyword id="KW-0813">Transport</keyword>
<keyword id="KW-0853">WD repeat</keyword>
<name>RAE1L_MOUSE</name>
<reference key="1">
    <citation type="journal article" date="2005" name="Science">
        <title>The transcriptional landscape of the mammalian genome.</title>
        <authorList>
            <person name="Carninci P."/>
            <person name="Kasukawa T."/>
            <person name="Katayama S."/>
            <person name="Gough J."/>
            <person name="Frith M.C."/>
            <person name="Maeda N."/>
            <person name="Oyama R."/>
            <person name="Ravasi T."/>
            <person name="Lenhard B."/>
            <person name="Wells C."/>
            <person name="Kodzius R."/>
            <person name="Shimokawa K."/>
            <person name="Bajic V.B."/>
            <person name="Brenner S.E."/>
            <person name="Batalov S."/>
            <person name="Forrest A.R."/>
            <person name="Zavolan M."/>
            <person name="Davis M.J."/>
            <person name="Wilming L.G."/>
            <person name="Aidinis V."/>
            <person name="Allen J.E."/>
            <person name="Ambesi-Impiombato A."/>
            <person name="Apweiler R."/>
            <person name="Aturaliya R.N."/>
            <person name="Bailey T.L."/>
            <person name="Bansal M."/>
            <person name="Baxter L."/>
            <person name="Beisel K.W."/>
            <person name="Bersano T."/>
            <person name="Bono H."/>
            <person name="Chalk A.M."/>
            <person name="Chiu K.P."/>
            <person name="Choudhary V."/>
            <person name="Christoffels A."/>
            <person name="Clutterbuck D.R."/>
            <person name="Crowe M.L."/>
            <person name="Dalla E."/>
            <person name="Dalrymple B.P."/>
            <person name="de Bono B."/>
            <person name="Della Gatta G."/>
            <person name="di Bernardo D."/>
            <person name="Down T."/>
            <person name="Engstrom P."/>
            <person name="Fagiolini M."/>
            <person name="Faulkner G."/>
            <person name="Fletcher C.F."/>
            <person name="Fukushima T."/>
            <person name="Furuno M."/>
            <person name="Futaki S."/>
            <person name="Gariboldi M."/>
            <person name="Georgii-Hemming P."/>
            <person name="Gingeras T.R."/>
            <person name="Gojobori T."/>
            <person name="Green R.E."/>
            <person name="Gustincich S."/>
            <person name="Harbers M."/>
            <person name="Hayashi Y."/>
            <person name="Hensch T.K."/>
            <person name="Hirokawa N."/>
            <person name="Hill D."/>
            <person name="Huminiecki L."/>
            <person name="Iacono M."/>
            <person name="Ikeo K."/>
            <person name="Iwama A."/>
            <person name="Ishikawa T."/>
            <person name="Jakt M."/>
            <person name="Kanapin A."/>
            <person name="Katoh M."/>
            <person name="Kawasawa Y."/>
            <person name="Kelso J."/>
            <person name="Kitamura H."/>
            <person name="Kitano H."/>
            <person name="Kollias G."/>
            <person name="Krishnan S.P."/>
            <person name="Kruger A."/>
            <person name="Kummerfeld S.K."/>
            <person name="Kurochkin I.V."/>
            <person name="Lareau L.F."/>
            <person name="Lazarevic D."/>
            <person name="Lipovich L."/>
            <person name="Liu J."/>
            <person name="Liuni S."/>
            <person name="McWilliam S."/>
            <person name="Madan Babu M."/>
            <person name="Madera M."/>
            <person name="Marchionni L."/>
            <person name="Matsuda H."/>
            <person name="Matsuzawa S."/>
            <person name="Miki H."/>
            <person name="Mignone F."/>
            <person name="Miyake S."/>
            <person name="Morris K."/>
            <person name="Mottagui-Tabar S."/>
            <person name="Mulder N."/>
            <person name="Nakano N."/>
            <person name="Nakauchi H."/>
            <person name="Ng P."/>
            <person name="Nilsson R."/>
            <person name="Nishiguchi S."/>
            <person name="Nishikawa S."/>
            <person name="Nori F."/>
            <person name="Ohara O."/>
            <person name="Okazaki Y."/>
            <person name="Orlando V."/>
            <person name="Pang K.C."/>
            <person name="Pavan W.J."/>
            <person name="Pavesi G."/>
            <person name="Pesole G."/>
            <person name="Petrovsky N."/>
            <person name="Piazza S."/>
            <person name="Reed J."/>
            <person name="Reid J.F."/>
            <person name="Ring B.Z."/>
            <person name="Ringwald M."/>
            <person name="Rost B."/>
            <person name="Ruan Y."/>
            <person name="Salzberg S.L."/>
            <person name="Sandelin A."/>
            <person name="Schneider C."/>
            <person name="Schoenbach C."/>
            <person name="Sekiguchi K."/>
            <person name="Semple C.A."/>
            <person name="Seno S."/>
            <person name="Sessa L."/>
            <person name="Sheng Y."/>
            <person name="Shibata Y."/>
            <person name="Shimada H."/>
            <person name="Shimada K."/>
            <person name="Silva D."/>
            <person name="Sinclair B."/>
            <person name="Sperling S."/>
            <person name="Stupka E."/>
            <person name="Sugiura K."/>
            <person name="Sultana R."/>
            <person name="Takenaka Y."/>
            <person name="Taki K."/>
            <person name="Tammoja K."/>
            <person name="Tan S.L."/>
            <person name="Tang S."/>
            <person name="Taylor M.S."/>
            <person name="Tegner J."/>
            <person name="Teichmann S.A."/>
            <person name="Ueda H.R."/>
            <person name="van Nimwegen E."/>
            <person name="Verardo R."/>
            <person name="Wei C.L."/>
            <person name="Yagi K."/>
            <person name="Yamanishi H."/>
            <person name="Zabarovsky E."/>
            <person name="Zhu S."/>
            <person name="Zimmer A."/>
            <person name="Hide W."/>
            <person name="Bult C."/>
            <person name="Grimmond S.M."/>
            <person name="Teasdale R.D."/>
            <person name="Liu E.T."/>
            <person name="Brusic V."/>
            <person name="Quackenbush J."/>
            <person name="Wahlestedt C."/>
            <person name="Mattick J.S."/>
            <person name="Hume D.A."/>
            <person name="Kai C."/>
            <person name="Sasaki D."/>
            <person name="Tomaru Y."/>
            <person name="Fukuda S."/>
            <person name="Kanamori-Katayama M."/>
            <person name="Suzuki M."/>
            <person name="Aoki J."/>
            <person name="Arakawa T."/>
            <person name="Iida J."/>
            <person name="Imamura K."/>
            <person name="Itoh M."/>
            <person name="Kato T."/>
            <person name="Kawaji H."/>
            <person name="Kawagashira N."/>
            <person name="Kawashima T."/>
            <person name="Kojima M."/>
            <person name="Kondo S."/>
            <person name="Konno H."/>
            <person name="Nakano K."/>
            <person name="Ninomiya N."/>
            <person name="Nishio T."/>
            <person name="Okada M."/>
            <person name="Plessy C."/>
            <person name="Shibata K."/>
            <person name="Shiraki T."/>
            <person name="Suzuki S."/>
            <person name="Tagami M."/>
            <person name="Waki K."/>
            <person name="Watahiki A."/>
            <person name="Okamura-Oho Y."/>
            <person name="Suzuki H."/>
            <person name="Kawai J."/>
            <person name="Hayashizaki Y."/>
        </authorList>
    </citation>
    <scope>NUCLEOTIDE SEQUENCE [LARGE SCALE MRNA]</scope>
    <source>
        <strain>C57BL/6J</strain>
        <strain>NOD</strain>
        <tissue>Cerebellum</tissue>
        <tissue>Liver</tissue>
        <tissue>Spleen</tissue>
    </source>
</reference>
<reference key="2">
    <citation type="journal article" date="2004" name="Genome Res.">
        <title>The status, quality, and expansion of the NIH full-length cDNA project: the Mammalian Gene Collection (MGC).</title>
        <authorList>
            <consortium name="The MGC Project Team"/>
        </authorList>
    </citation>
    <scope>NUCLEOTIDE SEQUENCE [LARGE SCALE MRNA]</scope>
    <source>
        <strain>C57BL/6J</strain>
        <tissue>Brain</tissue>
    </source>
</reference>
<reference key="3">
    <citation type="journal article" date="1999" name="J. Cell Biol.">
        <title>RAE1 is a shuttling mRNA export factor that binds to a GLEBS-like NUP98 motif at the nuclear pore complex through multiple domains.</title>
        <authorList>
            <person name="Pritchard C.E."/>
            <person name="Fornerod M."/>
            <person name="Kasper L.H."/>
            <person name="van Deursen J.M."/>
        </authorList>
    </citation>
    <scope>INTERACTION WITH NUP98</scope>
</reference>
<reference key="4">
    <citation type="journal article" date="2010" name="Cell">
        <title>A tissue-specific atlas of mouse protein phosphorylation and expression.</title>
        <authorList>
            <person name="Huttlin E.L."/>
            <person name="Jedrychowski M.P."/>
            <person name="Elias J.E."/>
            <person name="Goswami T."/>
            <person name="Rad R."/>
            <person name="Beausoleil S.A."/>
            <person name="Villen J."/>
            <person name="Haas W."/>
            <person name="Sowa M.E."/>
            <person name="Gygi S.P."/>
        </authorList>
    </citation>
    <scope>IDENTIFICATION BY MASS SPECTROMETRY [LARGE SCALE ANALYSIS]</scope>
    <source>
        <tissue>Kidney</tissue>
        <tissue>Spleen</tissue>
        <tissue>Testis</tissue>
    </source>
</reference>
<evidence type="ECO:0000250" key="1">
    <source>
        <dbReference type="UniProtKB" id="P78406"/>
    </source>
</evidence>
<evidence type="ECO:0000256" key="2">
    <source>
        <dbReference type="SAM" id="MobiDB-lite"/>
    </source>
</evidence>
<evidence type="ECO:0000269" key="3">
    <source>
    </source>
</evidence>
<evidence type="ECO:0000305" key="4"/>
<evidence type="ECO:0007829" key="5">
    <source>
        <dbReference type="PDB" id="7BYF"/>
    </source>
</evidence>
<dbReference type="EMBL" id="AK079383">
    <property type="protein sequence ID" value="BAC37627.1"/>
    <property type="molecule type" value="mRNA"/>
</dbReference>
<dbReference type="EMBL" id="AK146058">
    <property type="protein sequence ID" value="BAE26867.1"/>
    <property type="molecule type" value="mRNA"/>
</dbReference>
<dbReference type="EMBL" id="AK156681">
    <property type="protein sequence ID" value="BAE33805.1"/>
    <property type="molecule type" value="mRNA"/>
</dbReference>
<dbReference type="EMBL" id="BC059051">
    <property type="protein sequence ID" value="AAH59051.1"/>
    <property type="molecule type" value="mRNA"/>
</dbReference>
<dbReference type="CCDS" id="CCDS17138.1"/>
<dbReference type="RefSeq" id="NP_780321.1">
    <property type="nucleotide sequence ID" value="NM_175112.5"/>
</dbReference>
<dbReference type="RefSeq" id="XP_006500086.1">
    <property type="nucleotide sequence ID" value="XM_006500023.2"/>
</dbReference>
<dbReference type="RefSeq" id="XP_006500087.1">
    <property type="nucleotide sequence ID" value="XM_006500024.5"/>
</dbReference>
<dbReference type="PDB" id="7BYF">
    <property type="method" value="X-ray"/>
    <property type="resolution" value="2.50 A"/>
    <property type="chains" value="A/D=24-368"/>
</dbReference>
<dbReference type="PDBsum" id="7BYF"/>
<dbReference type="SMR" id="Q8C570"/>
<dbReference type="BioGRID" id="211639">
    <property type="interactions" value="11"/>
</dbReference>
<dbReference type="ComplexPortal" id="CPX-4474">
    <property type="entry name" value="Nuclear pore complex"/>
</dbReference>
<dbReference type="FunCoup" id="Q8C570">
    <property type="interactions" value="4291"/>
</dbReference>
<dbReference type="IntAct" id="Q8C570">
    <property type="interactions" value="1"/>
</dbReference>
<dbReference type="STRING" id="10090.ENSMUSP00000029013"/>
<dbReference type="GlyGen" id="Q8C570">
    <property type="glycosylation" value="1 site, 1 O-linked glycan (1 site)"/>
</dbReference>
<dbReference type="iPTMnet" id="Q8C570"/>
<dbReference type="PhosphoSitePlus" id="Q8C570"/>
<dbReference type="SwissPalm" id="Q8C570"/>
<dbReference type="PaxDb" id="10090-ENSMUSP00000029013"/>
<dbReference type="PeptideAtlas" id="Q8C570"/>
<dbReference type="ProteomicsDB" id="253167"/>
<dbReference type="Pumba" id="Q8C570"/>
<dbReference type="Antibodypedia" id="14158">
    <property type="antibodies" value="279 antibodies from 38 providers"/>
</dbReference>
<dbReference type="DNASU" id="66679"/>
<dbReference type="Ensembl" id="ENSMUST00000029013.10">
    <property type="protein sequence ID" value="ENSMUSP00000029013.4"/>
    <property type="gene ID" value="ENSMUSG00000027509.12"/>
</dbReference>
<dbReference type="GeneID" id="66679"/>
<dbReference type="KEGG" id="mmu:66679"/>
<dbReference type="UCSC" id="uc008odg.2">
    <property type="organism name" value="mouse"/>
</dbReference>
<dbReference type="AGR" id="MGI:1913929"/>
<dbReference type="CTD" id="8480"/>
<dbReference type="MGI" id="MGI:1913929">
    <property type="gene designation" value="Rae1"/>
</dbReference>
<dbReference type="VEuPathDB" id="HostDB:ENSMUSG00000027509"/>
<dbReference type="eggNOG" id="KOG0647">
    <property type="taxonomic scope" value="Eukaryota"/>
</dbReference>
<dbReference type="GeneTree" id="ENSGT00950000183091"/>
<dbReference type="HOGENOM" id="CLU_038526_1_0_1"/>
<dbReference type="InParanoid" id="Q8C570"/>
<dbReference type="OMA" id="EAMDQSI"/>
<dbReference type="OrthoDB" id="256303at2759"/>
<dbReference type="PhylomeDB" id="Q8C570"/>
<dbReference type="TreeFam" id="TF105481"/>
<dbReference type="Reactome" id="R-MMU-159227">
    <property type="pathway name" value="Transport of the SLBP independent Mature mRNA"/>
</dbReference>
<dbReference type="Reactome" id="R-MMU-159230">
    <property type="pathway name" value="Transport of the SLBP Dependant Mature mRNA"/>
</dbReference>
<dbReference type="Reactome" id="R-MMU-159231">
    <property type="pathway name" value="Transport of Mature mRNA Derived from an Intronless Transcript"/>
</dbReference>
<dbReference type="Reactome" id="R-MMU-159236">
    <property type="pathway name" value="Transport of Mature mRNA derived from an Intron-Containing Transcript"/>
</dbReference>
<dbReference type="Reactome" id="R-MMU-170822">
    <property type="pathway name" value="Regulation of Glucokinase by Glucokinase Regulatory Protein"/>
</dbReference>
<dbReference type="Reactome" id="R-MMU-191859">
    <property type="pathway name" value="snRNP Assembly"/>
</dbReference>
<dbReference type="Reactome" id="R-MMU-3108214">
    <property type="pathway name" value="SUMOylation of DNA damage response and repair proteins"/>
</dbReference>
<dbReference type="Reactome" id="R-MMU-3232142">
    <property type="pathway name" value="SUMOylation of ubiquitinylation proteins"/>
</dbReference>
<dbReference type="Reactome" id="R-MMU-3301854">
    <property type="pathway name" value="Nuclear Pore Complex (NPC) Disassembly"/>
</dbReference>
<dbReference type="Reactome" id="R-MMU-3371453">
    <property type="pathway name" value="Regulation of HSF1-mediated heat shock response"/>
</dbReference>
<dbReference type="Reactome" id="R-MMU-4085377">
    <property type="pathway name" value="SUMOylation of SUMOylation proteins"/>
</dbReference>
<dbReference type="Reactome" id="R-MMU-4551638">
    <property type="pathway name" value="SUMOylation of chromatin organization proteins"/>
</dbReference>
<dbReference type="Reactome" id="R-MMU-4570464">
    <property type="pathway name" value="SUMOylation of RNA binding proteins"/>
</dbReference>
<dbReference type="Reactome" id="R-MMU-4615885">
    <property type="pathway name" value="SUMOylation of DNA replication proteins"/>
</dbReference>
<dbReference type="Reactome" id="R-MMU-5578749">
    <property type="pathway name" value="Transcriptional regulation by small RNAs"/>
</dbReference>
<dbReference type="BioGRID-ORCS" id="66679">
    <property type="hits" value="24 hits in 80 CRISPR screens"/>
</dbReference>
<dbReference type="ChiTaRS" id="Rae1">
    <property type="organism name" value="mouse"/>
</dbReference>
<dbReference type="PRO" id="PR:Q8C570"/>
<dbReference type="Proteomes" id="UP000000589">
    <property type="component" value="Chromosome 2"/>
</dbReference>
<dbReference type="RNAct" id="Q8C570">
    <property type="molecule type" value="protein"/>
</dbReference>
<dbReference type="Bgee" id="ENSMUSG00000027509">
    <property type="expression patterns" value="Expressed in otic placode and 267 other cell types or tissues"/>
</dbReference>
<dbReference type="ExpressionAtlas" id="Q8C570">
    <property type="expression patterns" value="baseline and differential"/>
</dbReference>
<dbReference type="GO" id="GO:0005737">
    <property type="term" value="C:cytoplasm"/>
    <property type="evidence" value="ECO:0007669"/>
    <property type="project" value="UniProtKB-SubCell"/>
</dbReference>
<dbReference type="GO" id="GO:0001650">
    <property type="term" value="C:fibrillar center"/>
    <property type="evidence" value="ECO:0007669"/>
    <property type="project" value="Ensembl"/>
</dbReference>
<dbReference type="GO" id="GO:0097431">
    <property type="term" value="C:mitotic spindle pole"/>
    <property type="evidence" value="ECO:0000250"/>
    <property type="project" value="UniProtKB"/>
</dbReference>
<dbReference type="GO" id="GO:0005635">
    <property type="term" value="C:nuclear envelope"/>
    <property type="evidence" value="ECO:0000266"/>
    <property type="project" value="ComplexPortal"/>
</dbReference>
<dbReference type="GO" id="GO:0005643">
    <property type="term" value="C:nuclear pore"/>
    <property type="evidence" value="ECO:0000303"/>
    <property type="project" value="ComplexPortal"/>
</dbReference>
<dbReference type="GO" id="GO:0005654">
    <property type="term" value="C:nucleoplasm"/>
    <property type="evidence" value="ECO:0007669"/>
    <property type="project" value="Ensembl"/>
</dbReference>
<dbReference type="GO" id="GO:0003723">
    <property type="term" value="F:RNA binding"/>
    <property type="evidence" value="ECO:0007669"/>
    <property type="project" value="Ensembl"/>
</dbReference>
<dbReference type="GO" id="GO:0051301">
    <property type="term" value="P:cell division"/>
    <property type="evidence" value="ECO:0007669"/>
    <property type="project" value="UniProtKB-KW"/>
</dbReference>
<dbReference type="GO" id="GO:0006913">
    <property type="term" value="P:nucleocytoplasmic transport"/>
    <property type="evidence" value="ECO:0000303"/>
    <property type="project" value="ComplexPortal"/>
</dbReference>
<dbReference type="GO" id="GO:0060236">
    <property type="term" value="P:regulation of mitotic spindle organization"/>
    <property type="evidence" value="ECO:0000250"/>
    <property type="project" value="UniProtKB"/>
</dbReference>
<dbReference type="FunFam" id="2.130.10.10:FF:000084">
    <property type="entry name" value="mRNA export factor"/>
    <property type="match status" value="1"/>
</dbReference>
<dbReference type="Gene3D" id="2.130.10.10">
    <property type="entry name" value="YVTN repeat-like/Quinoprotein amine dehydrogenase"/>
    <property type="match status" value="1"/>
</dbReference>
<dbReference type="InterPro" id="IPR020472">
    <property type="entry name" value="G-protein_beta_WD-40_rep"/>
</dbReference>
<dbReference type="InterPro" id="IPR015943">
    <property type="entry name" value="WD40/YVTN_repeat-like_dom_sf"/>
</dbReference>
<dbReference type="InterPro" id="IPR019775">
    <property type="entry name" value="WD40_repeat_CS"/>
</dbReference>
<dbReference type="InterPro" id="IPR036322">
    <property type="entry name" value="WD40_repeat_dom_sf"/>
</dbReference>
<dbReference type="InterPro" id="IPR001680">
    <property type="entry name" value="WD40_rpt"/>
</dbReference>
<dbReference type="PANTHER" id="PTHR10971">
    <property type="entry name" value="MRNA EXPORT FACTOR AND BUB3"/>
    <property type="match status" value="1"/>
</dbReference>
<dbReference type="Pfam" id="PF00400">
    <property type="entry name" value="WD40"/>
    <property type="match status" value="3"/>
</dbReference>
<dbReference type="PRINTS" id="PR00320">
    <property type="entry name" value="GPROTEINBRPT"/>
</dbReference>
<dbReference type="SMART" id="SM00320">
    <property type="entry name" value="WD40"/>
    <property type="match status" value="4"/>
</dbReference>
<dbReference type="SUPFAM" id="SSF50978">
    <property type="entry name" value="WD40 repeat-like"/>
    <property type="match status" value="1"/>
</dbReference>
<dbReference type="PROSITE" id="PS00678">
    <property type="entry name" value="WD_REPEATS_1"/>
    <property type="match status" value="2"/>
</dbReference>
<dbReference type="PROSITE" id="PS50082">
    <property type="entry name" value="WD_REPEATS_2"/>
    <property type="match status" value="3"/>
</dbReference>
<dbReference type="PROSITE" id="PS50294">
    <property type="entry name" value="WD_REPEATS_REGION"/>
    <property type="match status" value="1"/>
</dbReference>
<gene>
    <name type="primary">Rae1</name>
    <name type="synonym">Mrnp41</name>
</gene>
<protein>
    <recommendedName>
        <fullName>mRNA export factor</fullName>
    </recommendedName>
    <alternativeName>
        <fullName>Rae1 protein homolog</fullName>
    </alternativeName>
    <alternativeName>
        <fullName>mRNA-associated protein mrnp 41</fullName>
    </alternativeName>
</protein>